<organism>
    <name type="scientific">Agkistrodon piscivorus piscivorus</name>
    <name type="common">Eastern cottonmouth</name>
    <dbReference type="NCBI Taxonomy" id="8716"/>
    <lineage>
        <taxon>Eukaryota</taxon>
        <taxon>Metazoa</taxon>
        <taxon>Chordata</taxon>
        <taxon>Craniata</taxon>
        <taxon>Vertebrata</taxon>
        <taxon>Euteleostomi</taxon>
        <taxon>Lepidosauria</taxon>
        <taxon>Squamata</taxon>
        <taxon>Bifurcata</taxon>
        <taxon>Unidentata</taxon>
        <taxon>Episquamata</taxon>
        <taxon>Toxicofera</taxon>
        <taxon>Serpentes</taxon>
        <taxon>Colubroidea</taxon>
        <taxon>Viperidae</taxon>
        <taxon>Crotalinae</taxon>
        <taxon>Agkistrodon</taxon>
    </lineage>
</organism>
<comment type="function">
    <text evidence="3">Beta-galactoside lectin that agglutinates rabbit and human erythrocytes in a calcium-dependent fashion (MHC is 0.21 ug/ml on rabbit erythrocytes). Galactose (15 mM), lactose (20 mM), rhamnose (20 mM) and EGTA strongly inhibit this activity.</text>
</comment>
<comment type="subunit">
    <text evidence="3">Homodimer; disulfide-linked.</text>
</comment>
<comment type="subcellular location">
    <subcellularLocation>
        <location evidence="3">Secreted</location>
    </subcellularLocation>
</comment>
<comment type="tissue specificity">
    <text evidence="3">Expressed by the venom gland.</text>
</comment>
<comment type="similarity">
    <text evidence="4">Belongs to the true venom lectin family.</text>
</comment>
<proteinExistence type="evidence at protein level"/>
<keyword id="KW-0106">Calcium</keyword>
<keyword id="KW-0903">Direct protein sequencing</keyword>
<keyword id="KW-1015">Disulfide bond</keyword>
<keyword id="KW-0348">Hemagglutinin</keyword>
<keyword id="KW-0430">Lectin</keyword>
<keyword id="KW-0479">Metal-binding</keyword>
<keyword id="KW-0964">Secreted</keyword>
<accession>P0DM36</accession>
<sequence>NNCPHDWLPMNGLCYKIFDELKAWEDAERFCRKYKPGCHLASFHTYGESLEIAEYISDYHKGQAEVWIGLWDKKKDFSWEWTDRSCTDYLTWDKNQPDVYQNKEFCVELVSLTGYRLWNDQVCESKNAFLCQCKF</sequence>
<evidence type="ECO:0000250" key="1"/>
<evidence type="ECO:0000255" key="2">
    <source>
        <dbReference type="PROSITE-ProRule" id="PRU00040"/>
    </source>
</evidence>
<evidence type="ECO:0000269" key="3">
    <source>
    </source>
</evidence>
<evidence type="ECO:0000305" key="4"/>
<protein>
    <recommendedName>
        <fullName>C-type lectin APL</fullName>
        <shortName>CTL</shortName>
    </recommendedName>
</protein>
<dbReference type="SMR" id="P0DM36"/>
<dbReference type="GO" id="GO:0005576">
    <property type="term" value="C:extracellular region"/>
    <property type="evidence" value="ECO:0007669"/>
    <property type="project" value="UniProtKB-SubCell"/>
</dbReference>
<dbReference type="GO" id="GO:0030246">
    <property type="term" value="F:carbohydrate binding"/>
    <property type="evidence" value="ECO:0007669"/>
    <property type="project" value="UniProtKB-KW"/>
</dbReference>
<dbReference type="GO" id="GO:0046872">
    <property type="term" value="F:metal ion binding"/>
    <property type="evidence" value="ECO:0007669"/>
    <property type="project" value="UniProtKB-KW"/>
</dbReference>
<dbReference type="CDD" id="cd03594">
    <property type="entry name" value="CLECT_REG-1_like"/>
    <property type="match status" value="1"/>
</dbReference>
<dbReference type="FunFam" id="3.10.100.10:FF:000015">
    <property type="entry name" value="C-type lectin Cal"/>
    <property type="match status" value="1"/>
</dbReference>
<dbReference type="Gene3D" id="3.10.100.10">
    <property type="entry name" value="Mannose-Binding Protein A, subunit A"/>
    <property type="match status" value="1"/>
</dbReference>
<dbReference type="InterPro" id="IPR001304">
    <property type="entry name" value="C-type_lectin-like"/>
</dbReference>
<dbReference type="InterPro" id="IPR016186">
    <property type="entry name" value="C-type_lectin-like/link_sf"/>
</dbReference>
<dbReference type="InterPro" id="IPR050111">
    <property type="entry name" value="C-type_lectin/snaclec_domain"/>
</dbReference>
<dbReference type="InterPro" id="IPR018378">
    <property type="entry name" value="C-type_lectin_CS"/>
</dbReference>
<dbReference type="InterPro" id="IPR016187">
    <property type="entry name" value="CTDL_fold"/>
</dbReference>
<dbReference type="PANTHER" id="PTHR22803">
    <property type="entry name" value="MANNOSE, PHOSPHOLIPASE, LECTIN RECEPTOR RELATED"/>
    <property type="match status" value="1"/>
</dbReference>
<dbReference type="Pfam" id="PF00059">
    <property type="entry name" value="Lectin_C"/>
    <property type="match status" value="1"/>
</dbReference>
<dbReference type="SMART" id="SM00034">
    <property type="entry name" value="CLECT"/>
    <property type="match status" value="1"/>
</dbReference>
<dbReference type="SUPFAM" id="SSF56436">
    <property type="entry name" value="C-type lectin-like"/>
    <property type="match status" value="1"/>
</dbReference>
<dbReference type="PROSITE" id="PS00615">
    <property type="entry name" value="C_TYPE_LECTIN_1"/>
    <property type="match status" value="1"/>
</dbReference>
<dbReference type="PROSITE" id="PS50041">
    <property type="entry name" value="C_TYPE_LECTIN_2"/>
    <property type="match status" value="1"/>
</dbReference>
<reference key="1">
    <citation type="journal article" date="1999" name="Toxicon">
        <title>Primary structure and biological activity of snake venom lectin (APL) from Agkistrodon p. piscivorus (Eastern cottonmouth).</title>
        <authorList>
            <person name="Komori Y."/>
            <person name="Nikai T."/>
            <person name="Tohkai T."/>
            <person name="Sugihara H."/>
        </authorList>
    </citation>
    <scope>PROTEIN SEQUENCE</scope>
    <scope>FUNCTION</scope>
    <scope>SUBUNIT</scope>
    <scope>SUBCELLULAR LOCATION</scope>
    <scope>TISSUE SPECIFICITY</scope>
    <source>
        <tissue>Venom</tissue>
    </source>
</reference>
<name>LECG_AGKPI</name>
<feature type="chain" id="PRO_0000422555" description="C-type lectin APL">
    <location>
        <begin position="1"/>
        <end position="135"/>
    </location>
</feature>
<feature type="domain" description="C-type lectin" evidence="2">
    <location>
        <begin position="10"/>
        <end position="132"/>
    </location>
</feature>
<feature type="short sequence motif" description="Galactose-binding">
    <location>
        <begin position="96"/>
        <end position="98"/>
    </location>
</feature>
<feature type="binding site" evidence="1">
    <location>
        <position position="96"/>
    </location>
    <ligand>
        <name>Ca(2+)</name>
        <dbReference type="ChEBI" id="CHEBI:29108"/>
    </ligand>
</feature>
<feature type="binding site" evidence="1">
    <location>
        <position position="98"/>
    </location>
    <ligand>
        <name>Ca(2+)</name>
        <dbReference type="ChEBI" id="CHEBI:29108"/>
    </ligand>
</feature>
<feature type="binding site" evidence="1">
    <location>
        <position position="104"/>
    </location>
    <ligand>
        <name>Ca(2+)</name>
        <dbReference type="ChEBI" id="CHEBI:29108"/>
    </ligand>
</feature>
<feature type="binding site" evidence="1">
    <location>
        <position position="119"/>
    </location>
    <ligand>
        <name>Ca(2+)</name>
        <dbReference type="ChEBI" id="CHEBI:29108"/>
    </ligand>
</feature>
<feature type="binding site" evidence="1">
    <location>
        <position position="120"/>
    </location>
    <ligand>
        <name>Ca(2+)</name>
        <dbReference type="ChEBI" id="CHEBI:29108"/>
    </ligand>
</feature>
<feature type="disulfide bond" evidence="2">
    <location>
        <begin position="3"/>
        <end position="14"/>
    </location>
</feature>
<feature type="disulfide bond" evidence="2">
    <location>
        <begin position="31"/>
        <end position="131"/>
    </location>
</feature>
<feature type="disulfide bond" evidence="2">
    <location>
        <begin position="38"/>
        <end position="133"/>
    </location>
</feature>
<feature type="disulfide bond" description="Interchain" evidence="2">
    <location>
        <position position="86"/>
    </location>
</feature>
<feature type="disulfide bond" evidence="2">
    <location>
        <begin position="106"/>
        <end position="123"/>
    </location>
</feature>